<keyword id="KW-0963">Cytoplasm</keyword>
<keyword id="KW-1185">Reference proteome</keyword>
<keyword id="KW-0704">Schiff base</keyword>
<keyword id="KW-0784">Thiamine biosynthesis</keyword>
<keyword id="KW-0808">Transferase</keyword>
<sequence>MEGFNIGGKSLKSRLLVGTGKFASYDLMKQAIEGCGTQVVTMALRRVNLDHKEDNILEYIPKDTILLPNTSGARNAEEAIRIARLSRAMGCGDWVKIEVISDQKYLLPDNEETVKATEVLAKEGFIVLPYMNPDLMIAKRLESVGAAAVMPLGSPIGTNKGLQTKEMIRILIEEIKVPIIVDAGIGKPSQAAEAMEMGAEAVLVNTAIATAQNPVKMAKAFELAVRAGRLAFNGVTAPQAKVARASSPLTGFLHEGEA</sequence>
<organism>
    <name type="scientific">Alkaliphilus metalliredigens (strain QYMF)</name>
    <dbReference type="NCBI Taxonomy" id="293826"/>
    <lineage>
        <taxon>Bacteria</taxon>
        <taxon>Bacillati</taxon>
        <taxon>Bacillota</taxon>
        <taxon>Clostridia</taxon>
        <taxon>Peptostreptococcales</taxon>
        <taxon>Natronincolaceae</taxon>
        <taxon>Alkaliphilus</taxon>
    </lineage>
</organism>
<feature type="chain" id="PRO_1000124595" description="Thiazole synthase">
    <location>
        <begin position="1"/>
        <end position="258"/>
    </location>
</feature>
<feature type="active site" description="Schiff-base intermediate with DXP" evidence="1">
    <location>
        <position position="96"/>
    </location>
</feature>
<feature type="binding site" evidence="1">
    <location>
        <position position="157"/>
    </location>
    <ligand>
        <name>1-deoxy-D-xylulose 5-phosphate</name>
        <dbReference type="ChEBI" id="CHEBI:57792"/>
    </ligand>
</feature>
<feature type="binding site" evidence="1">
    <location>
        <begin position="183"/>
        <end position="184"/>
    </location>
    <ligand>
        <name>1-deoxy-D-xylulose 5-phosphate</name>
        <dbReference type="ChEBI" id="CHEBI:57792"/>
    </ligand>
</feature>
<feature type="binding site" evidence="1">
    <location>
        <begin position="205"/>
        <end position="206"/>
    </location>
    <ligand>
        <name>1-deoxy-D-xylulose 5-phosphate</name>
        <dbReference type="ChEBI" id="CHEBI:57792"/>
    </ligand>
</feature>
<protein>
    <recommendedName>
        <fullName evidence="1">Thiazole synthase</fullName>
        <ecNumber evidence="1">2.8.1.10</ecNumber>
    </recommendedName>
</protein>
<evidence type="ECO:0000255" key="1">
    <source>
        <dbReference type="HAMAP-Rule" id="MF_00443"/>
    </source>
</evidence>
<reference key="1">
    <citation type="journal article" date="2016" name="Genome Announc.">
        <title>Complete genome sequence of Alkaliphilus metalliredigens strain QYMF, an alkaliphilic and metal-reducing bacterium isolated from borax-contaminated leachate ponds.</title>
        <authorList>
            <person name="Hwang C."/>
            <person name="Copeland A."/>
            <person name="Lucas S."/>
            <person name="Lapidus A."/>
            <person name="Barry K."/>
            <person name="Detter J.C."/>
            <person name="Glavina Del Rio T."/>
            <person name="Hammon N."/>
            <person name="Israni S."/>
            <person name="Dalin E."/>
            <person name="Tice H."/>
            <person name="Pitluck S."/>
            <person name="Chertkov O."/>
            <person name="Brettin T."/>
            <person name="Bruce D."/>
            <person name="Han C."/>
            <person name="Schmutz J."/>
            <person name="Larimer F."/>
            <person name="Land M.L."/>
            <person name="Hauser L."/>
            <person name="Kyrpides N."/>
            <person name="Mikhailova N."/>
            <person name="Ye Q."/>
            <person name="Zhou J."/>
            <person name="Richardson P."/>
            <person name="Fields M.W."/>
        </authorList>
    </citation>
    <scope>NUCLEOTIDE SEQUENCE [LARGE SCALE GENOMIC DNA]</scope>
    <source>
        <strain>QYMF</strain>
    </source>
</reference>
<name>THIG_ALKMQ</name>
<dbReference type="EC" id="2.8.1.10" evidence="1"/>
<dbReference type="EMBL" id="CP000724">
    <property type="protein sequence ID" value="ABR50315.1"/>
    <property type="molecule type" value="Genomic_DNA"/>
</dbReference>
<dbReference type="RefSeq" id="WP_012065263.1">
    <property type="nucleotide sequence ID" value="NC_009633.1"/>
</dbReference>
<dbReference type="SMR" id="A6TVU7"/>
<dbReference type="STRING" id="293826.Amet_4235"/>
<dbReference type="KEGG" id="amt:Amet_4235"/>
<dbReference type="eggNOG" id="COG2022">
    <property type="taxonomic scope" value="Bacteria"/>
</dbReference>
<dbReference type="HOGENOM" id="CLU_062233_1_0_9"/>
<dbReference type="OrthoDB" id="9805935at2"/>
<dbReference type="UniPathway" id="UPA00060"/>
<dbReference type="Proteomes" id="UP000001572">
    <property type="component" value="Chromosome"/>
</dbReference>
<dbReference type="GO" id="GO:0005737">
    <property type="term" value="C:cytoplasm"/>
    <property type="evidence" value="ECO:0007669"/>
    <property type="project" value="UniProtKB-SubCell"/>
</dbReference>
<dbReference type="GO" id="GO:1990107">
    <property type="term" value="F:thiazole synthase activity"/>
    <property type="evidence" value="ECO:0007669"/>
    <property type="project" value="UniProtKB-EC"/>
</dbReference>
<dbReference type="GO" id="GO:0009229">
    <property type="term" value="P:thiamine diphosphate biosynthetic process"/>
    <property type="evidence" value="ECO:0007669"/>
    <property type="project" value="UniProtKB-UniRule"/>
</dbReference>
<dbReference type="CDD" id="cd04728">
    <property type="entry name" value="ThiG"/>
    <property type="match status" value="1"/>
</dbReference>
<dbReference type="Gene3D" id="3.20.20.70">
    <property type="entry name" value="Aldolase class I"/>
    <property type="match status" value="1"/>
</dbReference>
<dbReference type="HAMAP" id="MF_00443">
    <property type="entry name" value="ThiG"/>
    <property type="match status" value="1"/>
</dbReference>
<dbReference type="InterPro" id="IPR013785">
    <property type="entry name" value="Aldolase_TIM"/>
</dbReference>
<dbReference type="InterPro" id="IPR033983">
    <property type="entry name" value="Thiazole_synthase_ThiG"/>
</dbReference>
<dbReference type="InterPro" id="IPR008867">
    <property type="entry name" value="ThiG"/>
</dbReference>
<dbReference type="PANTHER" id="PTHR34266">
    <property type="entry name" value="THIAZOLE SYNTHASE"/>
    <property type="match status" value="1"/>
</dbReference>
<dbReference type="PANTHER" id="PTHR34266:SF2">
    <property type="entry name" value="THIAZOLE SYNTHASE"/>
    <property type="match status" value="1"/>
</dbReference>
<dbReference type="Pfam" id="PF05690">
    <property type="entry name" value="ThiG"/>
    <property type="match status" value="1"/>
</dbReference>
<dbReference type="SUPFAM" id="SSF110399">
    <property type="entry name" value="ThiG-like"/>
    <property type="match status" value="1"/>
</dbReference>
<accession>A6TVU7</accession>
<proteinExistence type="inferred from homology"/>
<gene>
    <name evidence="1" type="primary">thiG</name>
    <name type="ordered locus">Amet_4235</name>
</gene>
<comment type="function">
    <text evidence="1">Catalyzes the rearrangement of 1-deoxy-D-xylulose 5-phosphate (DXP) to produce the thiazole phosphate moiety of thiamine. Sulfur is provided by the thiocarboxylate moiety of the carrier protein ThiS. In vitro, sulfur can be provided by H(2)S.</text>
</comment>
<comment type="catalytic activity">
    <reaction evidence="1">
        <text>[ThiS sulfur-carrier protein]-C-terminal-Gly-aminoethanethioate + 2-iminoacetate + 1-deoxy-D-xylulose 5-phosphate = [ThiS sulfur-carrier protein]-C-terminal Gly-Gly + 2-[(2R,5Z)-2-carboxy-4-methylthiazol-5(2H)-ylidene]ethyl phosphate + 2 H2O + H(+)</text>
        <dbReference type="Rhea" id="RHEA:26297"/>
        <dbReference type="Rhea" id="RHEA-COMP:12909"/>
        <dbReference type="Rhea" id="RHEA-COMP:19908"/>
        <dbReference type="ChEBI" id="CHEBI:15377"/>
        <dbReference type="ChEBI" id="CHEBI:15378"/>
        <dbReference type="ChEBI" id="CHEBI:57792"/>
        <dbReference type="ChEBI" id="CHEBI:62899"/>
        <dbReference type="ChEBI" id="CHEBI:77846"/>
        <dbReference type="ChEBI" id="CHEBI:90778"/>
        <dbReference type="ChEBI" id="CHEBI:232372"/>
        <dbReference type="EC" id="2.8.1.10"/>
    </reaction>
</comment>
<comment type="pathway">
    <text evidence="1">Cofactor biosynthesis; thiamine diphosphate biosynthesis.</text>
</comment>
<comment type="subunit">
    <text evidence="1">Homotetramer. Forms heterodimers with either ThiH or ThiS.</text>
</comment>
<comment type="subcellular location">
    <subcellularLocation>
        <location evidence="1">Cytoplasm</location>
    </subcellularLocation>
</comment>
<comment type="similarity">
    <text evidence="1">Belongs to the ThiG family.</text>
</comment>